<evidence type="ECO:0000255" key="1">
    <source>
        <dbReference type="HAMAP-Rule" id="MF_00191"/>
    </source>
</evidence>
<protein>
    <recommendedName>
        <fullName evidence="1">4-hydroxy-3-methylbut-2-enyl diphosphate reductase</fullName>
        <shortName evidence="1">HMBPP reductase</shortName>
        <ecNumber evidence="1">1.17.7.4</ecNumber>
    </recommendedName>
</protein>
<accession>Q73WH6</accession>
<dbReference type="EC" id="1.17.7.4" evidence="1"/>
<dbReference type="EMBL" id="AE016958">
    <property type="protein sequence ID" value="AAS05001.1"/>
    <property type="molecule type" value="Genomic_DNA"/>
</dbReference>
<dbReference type="RefSeq" id="WP_003875386.1">
    <property type="nucleotide sequence ID" value="NZ_CP106873.1"/>
</dbReference>
<dbReference type="SMR" id="Q73WH6"/>
<dbReference type="STRING" id="262316.MAP_2684c"/>
<dbReference type="KEGG" id="mpa:MAP_2684c"/>
<dbReference type="eggNOG" id="COG0761">
    <property type="taxonomic scope" value="Bacteria"/>
</dbReference>
<dbReference type="HOGENOM" id="CLU_027486_1_0_11"/>
<dbReference type="UniPathway" id="UPA00056">
    <property type="reaction ID" value="UER00097"/>
</dbReference>
<dbReference type="UniPathway" id="UPA00059">
    <property type="reaction ID" value="UER00105"/>
</dbReference>
<dbReference type="Proteomes" id="UP000000580">
    <property type="component" value="Chromosome"/>
</dbReference>
<dbReference type="GO" id="GO:0051539">
    <property type="term" value="F:4 iron, 4 sulfur cluster binding"/>
    <property type="evidence" value="ECO:0007669"/>
    <property type="project" value="UniProtKB-UniRule"/>
</dbReference>
<dbReference type="GO" id="GO:0051745">
    <property type="term" value="F:4-hydroxy-3-methylbut-2-enyl diphosphate reductase activity"/>
    <property type="evidence" value="ECO:0007669"/>
    <property type="project" value="UniProtKB-UniRule"/>
</dbReference>
<dbReference type="GO" id="GO:0046872">
    <property type="term" value="F:metal ion binding"/>
    <property type="evidence" value="ECO:0007669"/>
    <property type="project" value="UniProtKB-KW"/>
</dbReference>
<dbReference type="GO" id="GO:0050992">
    <property type="term" value="P:dimethylallyl diphosphate biosynthetic process"/>
    <property type="evidence" value="ECO:0007669"/>
    <property type="project" value="UniProtKB-UniRule"/>
</dbReference>
<dbReference type="GO" id="GO:0019288">
    <property type="term" value="P:isopentenyl diphosphate biosynthetic process, methylerythritol 4-phosphate pathway"/>
    <property type="evidence" value="ECO:0007669"/>
    <property type="project" value="UniProtKB-UniRule"/>
</dbReference>
<dbReference type="GO" id="GO:0016114">
    <property type="term" value="P:terpenoid biosynthetic process"/>
    <property type="evidence" value="ECO:0007669"/>
    <property type="project" value="UniProtKB-UniRule"/>
</dbReference>
<dbReference type="CDD" id="cd13944">
    <property type="entry name" value="lytB_ispH"/>
    <property type="match status" value="1"/>
</dbReference>
<dbReference type="Gene3D" id="3.40.50.11270">
    <property type="match status" value="1"/>
</dbReference>
<dbReference type="Gene3D" id="3.40.1010.20">
    <property type="entry name" value="4-hydroxy-3-methylbut-2-enyl diphosphate reductase, catalytic domain"/>
    <property type="match status" value="2"/>
</dbReference>
<dbReference type="HAMAP" id="MF_00191">
    <property type="entry name" value="IspH"/>
    <property type="match status" value="1"/>
</dbReference>
<dbReference type="InterPro" id="IPR003451">
    <property type="entry name" value="LytB/IspH"/>
</dbReference>
<dbReference type="NCBIfam" id="TIGR00216">
    <property type="entry name" value="ispH_lytB"/>
    <property type="match status" value="1"/>
</dbReference>
<dbReference type="NCBIfam" id="NF002188">
    <property type="entry name" value="PRK01045.1-2"/>
    <property type="match status" value="1"/>
</dbReference>
<dbReference type="NCBIfam" id="NF002189">
    <property type="entry name" value="PRK01045.1-3"/>
    <property type="match status" value="1"/>
</dbReference>
<dbReference type="NCBIfam" id="NF002190">
    <property type="entry name" value="PRK01045.1-4"/>
    <property type="match status" value="1"/>
</dbReference>
<dbReference type="PANTHER" id="PTHR30426">
    <property type="entry name" value="4-HYDROXY-3-METHYLBUT-2-ENYL DIPHOSPHATE REDUCTASE"/>
    <property type="match status" value="1"/>
</dbReference>
<dbReference type="PANTHER" id="PTHR30426:SF0">
    <property type="entry name" value="4-HYDROXY-3-METHYLBUT-2-ENYL DIPHOSPHATE REDUCTASE"/>
    <property type="match status" value="1"/>
</dbReference>
<dbReference type="Pfam" id="PF02401">
    <property type="entry name" value="LYTB"/>
    <property type="match status" value="1"/>
</dbReference>
<organism>
    <name type="scientific">Mycolicibacterium paratuberculosis (strain ATCC BAA-968 / K-10)</name>
    <name type="common">Mycobacterium paratuberculosis</name>
    <dbReference type="NCBI Taxonomy" id="262316"/>
    <lineage>
        <taxon>Bacteria</taxon>
        <taxon>Bacillati</taxon>
        <taxon>Actinomycetota</taxon>
        <taxon>Actinomycetes</taxon>
        <taxon>Mycobacteriales</taxon>
        <taxon>Mycobacteriaceae</taxon>
        <taxon>Mycobacterium</taxon>
        <taxon>Mycobacterium avium complex (MAC)</taxon>
    </lineage>
</organism>
<comment type="function">
    <text evidence="1">Catalyzes the conversion of 1-hydroxy-2-methyl-2-(E)-butenyl 4-diphosphate (HMBPP) into a mixture of isopentenyl diphosphate (IPP) and dimethylallyl diphosphate (DMAPP). Acts in the terminal step of the DOXP/MEP pathway for isoprenoid precursor biosynthesis.</text>
</comment>
<comment type="catalytic activity">
    <reaction evidence="1">
        <text>isopentenyl diphosphate + 2 oxidized [2Fe-2S]-[ferredoxin] + H2O = (2E)-4-hydroxy-3-methylbut-2-enyl diphosphate + 2 reduced [2Fe-2S]-[ferredoxin] + 2 H(+)</text>
        <dbReference type="Rhea" id="RHEA:24488"/>
        <dbReference type="Rhea" id="RHEA-COMP:10000"/>
        <dbReference type="Rhea" id="RHEA-COMP:10001"/>
        <dbReference type="ChEBI" id="CHEBI:15377"/>
        <dbReference type="ChEBI" id="CHEBI:15378"/>
        <dbReference type="ChEBI" id="CHEBI:33737"/>
        <dbReference type="ChEBI" id="CHEBI:33738"/>
        <dbReference type="ChEBI" id="CHEBI:128753"/>
        <dbReference type="ChEBI" id="CHEBI:128769"/>
        <dbReference type="EC" id="1.17.7.4"/>
    </reaction>
</comment>
<comment type="catalytic activity">
    <reaction evidence="1">
        <text>dimethylallyl diphosphate + 2 oxidized [2Fe-2S]-[ferredoxin] + H2O = (2E)-4-hydroxy-3-methylbut-2-enyl diphosphate + 2 reduced [2Fe-2S]-[ferredoxin] + 2 H(+)</text>
        <dbReference type="Rhea" id="RHEA:24825"/>
        <dbReference type="Rhea" id="RHEA-COMP:10000"/>
        <dbReference type="Rhea" id="RHEA-COMP:10001"/>
        <dbReference type="ChEBI" id="CHEBI:15377"/>
        <dbReference type="ChEBI" id="CHEBI:15378"/>
        <dbReference type="ChEBI" id="CHEBI:33737"/>
        <dbReference type="ChEBI" id="CHEBI:33738"/>
        <dbReference type="ChEBI" id="CHEBI:57623"/>
        <dbReference type="ChEBI" id="CHEBI:128753"/>
        <dbReference type="EC" id="1.17.7.4"/>
    </reaction>
</comment>
<comment type="cofactor">
    <cofactor evidence="1">
        <name>[4Fe-4S] cluster</name>
        <dbReference type="ChEBI" id="CHEBI:49883"/>
    </cofactor>
    <text evidence="1">Binds 1 [4Fe-4S] cluster per subunit.</text>
</comment>
<comment type="pathway">
    <text evidence="1">Isoprenoid biosynthesis; dimethylallyl diphosphate biosynthesis; dimethylallyl diphosphate from (2E)-4-hydroxy-3-methylbutenyl diphosphate: step 1/1.</text>
</comment>
<comment type="pathway">
    <text evidence="1">Isoprenoid biosynthesis; isopentenyl diphosphate biosynthesis via DXP pathway; isopentenyl diphosphate from 1-deoxy-D-xylulose 5-phosphate: step 6/6.</text>
</comment>
<comment type="similarity">
    <text evidence="1">Belongs to the IspH family.</text>
</comment>
<keyword id="KW-0004">4Fe-4S</keyword>
<keyword id="KW-0408">Iron</keyword>
<keyword id="KW-0411">Iron-sulfur</keyword>
<keyword id="KW-0414">Isoprene biosynthesis</keyword>
<keyword id="KW-0479">Metal-binding</keyword>
<keyword id="KW-0560">Oxidoreductase</keyword>
<keyword id="KW-1185">Reference proteome</keyword>
<sequence>MPPTVDMGIPGASSSVAVNPTRKRVLLAEPRGYCAGVDRAVETVERALEKHGPPVYVRHEIVHNRHVVSTLEKAGAVFVEETDEVPEGAIVVFSAHGVAPTVHAAAAERNLHTIDATCPLVTKVHNEARRFARNDYDILLIGHEGHEEVVGTAGEAPDHVQLVDGVAAVDNVRVRDEDKVVWLSQTTLSVDETMEIVERLRQRFPKLQDPPSDDICYATQNRQVAVKAMAPECDLVIVVGSRNSSNSVRLVEVALGGGAGAAHLVDWADDIDPAWLEGVTTVGVTSGASVPEVLVQGVLERLAECGFDVVQPVTTAQETLVFALPREIRSAR</sequence>
<feature type="chain" id="PRO_0000128839" description="4-hydroxy-3-methylbut-2-enyl diphosphate reductase">
    <location>
        <begin position="1"/>
        <end position="332"/>
    </location>
</feature>
<feature type="active site" description="Proton donor" evidence="1">
    <location>
        <position position="148"/>
    </location>
</feature>
<feature type="binding site" evidence="1">
    <location>
        <position position="34"/>
    </location>
    <ligand>
        <name>[4Fe-4S] cluster</name>
        <dbReference type="ChEBI" id="CHEBI:49883"/>
    </ligand>
</feature>
<feature type="binding site" evidence="1">
    <location>
        <position position="63"/>
    </location>
    <ligand>
        <name>(2E)-4-hydroxy-3-methylbut-2-enyl diphosphate</name>
        <dbReference type="ChEBI" id="CHEBI:128753"/>
    </ligand>
</feature>
<feature type="binding site" evidence="1">
    <location>
        <position position="63"/>
    </location>
    <ligand>
        <name>dimethylallyl diphosphate</name>
        <dbReference type="ChEBI" id="CHEBI:57623"/>
    </ligand>
</feature>
<feature type="binding site" evidence="1">
    <location>
        <position position="63"/>
    </location>
    <ligand>
        <name>isopentenyl diphosphate</name>
        <dbReference type="ChEBI" id="CHEBI:128769"/>
    </ligand>
</feature>
<feature type="binding site" evidence="1">
    <location>
        <position position="96"/>
    </location>
    <ligand>
        <name>(2E)-4-hydroxy-3-methylbut-2-enyl diphosphate</name>
        <dbReference type="ChEBI" id="CHEBI:128753"/>
    </ligand>
</feature>
<feature type="binding site" evidence="1">
    <location>
        <position position="96"/>
    </location>
    <ligand>
        <name>dimethylallyl diphosphate</name>
        <dbReference type="ChEBI" id="CHEBI:57623"/>
    </ligand>
</feature>
<feature type="binding site" evidence="1">
    <location>
        <position position="96"/>
    </location>
    <ligand>
        <name>isopentenyl diphosphate</name>
        <dbReference type="ChEBI" id="CHEBI:128769"/>
    </ligand>
</feature>
<feature type="binding site" evidence="1">
    <location>
        <position position="118"/>
    </location>
    <ligand>
        <name>[4Fe-4S] cluster</name>
        <dbReference type="ChEBI" id="CHEBI:49883"/>
    </ligand>
</feature>
<feature type="binding site" evidence="1">
    <location>
        <position position="146"/>
    </location>
    <ligand>
        <name>(2E)-4-hydroxy-3-methylbut-2-enyl diphosphate</name>
        <dbReference type="ChEBI" id="CHEBI:128753"/>
    </ligand>
</feature>
<feature type="binding site" evidence="1">
    <location>
        <position position="146"/>
    </location>
    <ligand>
        <name>dimethylallyl diphosphate</name>
        <dbReference type="ChEBI" id="CHEBI:57623"/>
    </ligand>
</feature>
<feature type="binding site" evidence="1">
    <location>
        <position position="146"/>
    </location>
    <ligand>
        <name>isopentenyl diphosphate</name>
        <dbReference type="ChEBI" id="CHEBI:128769"/>
    </ligand>
</feature>
<feature type="binding site" evidence="1">
    <location>
        <position position="186"/>
    </location>
    <ligand>
        <name>(2E)-4-hydroxy-3-methylbut-2-enyl diphosphate</name>
        <dbReference type="ChEBI" id="CHEBI:128753"/>
    </ligand>
</feature>
<feature type="binding site" evidence="1">
    <location>
        <position position="216"/>
    </location>
    <ligand>
        <name>[4Fe-4S] cluster</name>
        <dbReference type="ChEBI" id="CHEBI:49883"/>
    </ligand>
</feature>
<feature type="binding site" evidence="1">
    <location>
        <position position="244"/>
    </location>
    <ligand>
        <name>(2E)-4-hydroxy-3-methylbut-2-enyl diphosphate</name>
        <dbReference type="ChEBI" id="CHEBI:128753"/>
    </ligand>
</feature>
<feature type="binding site" evidence="1">
    <location>
        <position position="244"/>
    </location>
    <ligand>
        <name>dimethylallyl diphosphate</name>
        <dbReference type="ChEBI" id="CHEBI:57623"/>
    </ligand>
</feature>
<feature type="binding site" evidence="1">
    <location>
        <position position="244"/>
    </location>
    <ligand>
        <name>isopentenyl diphosphate</name>
        <dbReference type="ChEBI" id="CHEBI:128769"/>
    </ligand>
</feature>
<feature type="binding site" evidence="1">
    <location>
        <position position="245"/>
    </location>
    <ligand>
        <name>(2E)-4-hydroxy-3-methylbut-2-enyl diphosphate</name>
        <dbReference type="ChEBI" id="CHEBI:128753"/>
    </ligand>
</feature>
<feature type="binding site" evidence="1">
    <location>
        <position position="245"/>
    </location>
    <ligand>
        <name>dimethylallyl diphosphate</name>
        <dbReference type="ChEBI" id="CHEBI:57623"/>
    </ligand>
</feature>
<feature type="binding site" evidence="1">
    <location>
        <position position="245"/>
    </location>
    <ligand>
        <name>isopentenyl diphosphate</name>
        <dbReference type="ChEBI" id="CHEBI:128769"/>
    </ligand>
</feature>
<feature type="binding site" evidence="1">
    <location>
        <position position="246"/>
    </location>
    <ligand>
        <name>(2E)-4-hydroxy-3-methylbut-2-enyl diphosphate</name>
        <dbReference type="ChEBI" id="CHEBI:128753"/>
    </ligand>
</feature>
<feature type="binding site" evidence="1">
    <location>
        <position position="246"/>
    </location>
    <ligand>
        <name>dimethylallyl diphosphate</name>
        <dbReference type="ChEBI" id="CHEBI:57623"/>
    </ligand>
</feature>
<feature type="binding site" evidence="1">
    <location>
        <position position="246"/>
    </location>
    <ligand>
        <name>isopentenyl diphosphate</name>
        <dbReference type="ChEBI" id="CHEBI:128769"/>
    </ligand>
</feature>
<feature type="binding site" evidence="1">
    <location>
        <position position="289"/>
    </location>
    <ligand>
        <name>(2E)-4-hydroxy-3-methylbut-2-enyl diphosphate</name>
        <dbReference type="ChEBI" id="CHEBI:128753"/>
    </ligand>
</feature>
<feature type="binding site" evidence="1">
    <location>
        <position position="289"/>
    </location>
    <ligand>
        <name>dimethylallyl diphosphate</name>
        <dbReference type="ChEBI" id="CHEBI:57623"/>
    </ligand>
</feature>
<feature type="binding site" evidence="1">
    <location>
        <position position="289"/>
    </location>
    <ligand>
        <name>isopentenyl diphosphate</name>
        <dbReference type="ChEBI" id="CHEBI:128769"/>
    </ligand>
</feature>
<reference key="1">
    <citation type="journal article" date="2005" name="Proc. Natl. Acad. Sci. U.S.A.">
        <title>The complete genome sequence of Mycobacterium avium subspecies paratuberculosis.</title>
        <authorList>
            <person name="Li L."/>
            <person name="Bannantine J.P."/>
            <person name="Zhang Q."/>
            <person name="Amonsin A."/>
            <person name="May B.J."/>
            <person name="Alt D."/>
            <person name="Banerji N."/>
            <person name="Kanjilal S."/>
            <person name="Kapur V."/>
        </authorList>
    </citation>
    <scope>NUCLEOTIDE SEQUENCE [LARGE SCALE GENOMIC DNA]</scope>
    <source>
        <strain>ATCC BAA-968 / K-10</strain>
    </source>
</reference>
<gene>
    <name evidence="1" type="primary">ispH</name>
    <name type="synonym">lytB'</name>
    <name type="ordered locus">MAP_2684c</name>
</gene>
<name>ISPH_MYCPA</name>
<proteinExistence type="inferred from homology"/>